<proteinExistence type="inferred from homology"/>
<organism>
    <name type="scientific">Syntrophotalea carbinolica (strain DSM 2380 / NBRC 103641 / GraBd1)</name>
    <name type="common">Pelobacter carbinolicus</name>
    <dbReference type="NCBI Taxonomy" id="338963"/>
    <lineage>
        <taxon>Bacteria</taxon>
        <taxon>Pseudomonadati</taxon>
        <taxon>Thermodesulfobacteriota</taxon>
        <taxon>Desulfuromonadia</taxon>
        <taxon>Desulfuromonadales</taxon>
        <taxon>Syntrophotaleaceae</taxon>
        <taxon>Syntrophotalea</taxon>
    </lineage>
</organism>
<sequence>MSESRSMVEIFSDGACSGNPGPGGFGTLLRCGERVRELSGFDPETTNNRMELLGAIAGLEALTRPCRVRLTTDSQYVCKGMTEWIHGWQKKGWKNSKKEDVANRDLWERLLVLVSKHEVSWHWVRGHAGHAENERCDELARQAIADGCSSVV</sequence>
<feature type="chain" id="PRO_0000332643" description="Ribonuclease H">
    <location>
        <begin position="1"/>
        <end position="152"/>
    </location>
</feature>
<feature type="domain" description="RNase H type-1" evidence="2">
    <location>
        <begin position="4"/>
        <end position="145"/>
    </location>
</feature>
<feature type="binding site" evidence="1">
    <location>
        <position position="13"/>
    </location>
    <ligand>
        <name>Mg(2+)</name>
        <dbReference type="ChEBI" id="CHEBI:18420"/>
        <label>1</label>
    </ligand>
</feature>
<feature type="binding site" evidence="1">
    <location>
        <position position="13"/>
    </location>
    <ligand>
        <name>Mg(2+)</name>
        <dbReference type="ChEBI" id="CHEBI:18420"/>
        <label>2</label>
    </ligand>
</feature>
<feature type="binding site" evidence="1">
    <location>
        <position position="51"/>
    </location>
    <ligand>
        <name>Mg(2+)</name>
        <dbReference type="ChEBI" id="CHEBI:18420"/>
        <label>1</label>
    </ligand>
</feature>
<feature type="binding site" evidence="1">
    <location>
        <position position="73"/>
    </location>
    <ligand>
        <name>Mg(2+)</name>
        <dbReference type="ChEBI" id="CHEBI:18420"/>
        <label>1</label>
    </ligand>
</feature>
<feature type="binding site" evidence="1">
    <location>
        <position position="137"/>
    </location>
    <ligand>
        <name>Mg(2+)</name>
        <dbReference type="ChEBI" id="CHEBI:18420"/>
        <label>2</label>
    </ligand>
</feature>
<gene>
    <name evidence="1" type="primary">rnhA</name>
    <name type="ordered locus">Pcar_0204</name>
</gene>
<name>RNH_SYNC1</name>
<evidence type="ECO:0000255" key="1">
    <source>
        <dbReference type="HAMAP-Rule" id="MF_00042"/>
    </source>
</evidence>
<evidence type="ECO:0000255" key="2">
    <source>
        <dbReference type="PROSITE-ProRule" id="PRU00408"/>
    </source>
</evidence>
<reference key="1">
    <citation type="submission" date="2005-10" db="EMBL/GenBank/DDBJ databases">
        <title>Complete sequence of Pelobacter carbinolicus DSM 2380.</title>
        <authorList>
            <person name="Copeland A."/>
            <person name="Lucas S."/>
            <person name="Lapidus A."/>
            <person name="Barry K."/>
            <person name="Detter J.C."/>
            <person name="Glavina T."/>
            <person name="Hammon N."/>
            <person name="Israni S."/>
            <person name="Pitluck S."/>
            <person name="Chertkov O."/>
            <person name="Schmutz J."/>
            <person name="Larimer F."/>
            <person name="Land M."/>
            <person name="Kyrpides N."/>
            <person name="Ivanova N."/>
            <person name="Richardson P."/>
        </authorList>
    </citation>
    <scope>NUCLEOTIDE SEQUENCE [LARGE SCALE GENOMIC DNA]</scope>
    <source>
        <strain>DSM 2380 / NBRC 103641 / GraBd1</strain>
    </source>
</reference>
<dbReference type="EC" id="3.1.26.4" evidence="1"/>
<dbReference type="EMBL" id="CP000142">
    <property type="protein sequence ID" value="ABA87465.1"/>
    <property type="molecule type" value="Genomic_DNA"/>
</dbReference>
<dbReference type="RefSeq" id="WP_011339865.1">
    <property type="nucleotide sequence ID" value="NC_007498.2"/>
</dbReference>
<dbReference type="SMR" id="Q3A827"/>
<dbReference type="STRING" id="338963.Pcar_0204"/>
<dbReference type="KEGG" id="pca:Pcar_0204"/>
<dbReference type="eggNOG" id="COG0328">
    <property type="taxonomic scope" value="Bacteria"/>
</dbReference>
<dbReference type="HOGENOM" id="CLU_030894_6_0_7"/>
<dbReference type="OrthoDB" id="7845843at2"/>
<dbReference type="Proteomes" id="UP000002534">
    <property type="component" value="Chromosome"/>
</dbReference>
<dbReference type="GO" id="GO:0005737">
    <property type="term" value="C:cytoplasm"/>
    <property type="evidence" value="ECO:0007669"/>
    <property type="project" value="UniProtKB-SubCell"/>
</dbReference>
<dbReference type="GO" id="GO:0000287">
    <property type="term" value="F:magnesium ion binding"/>
    <property type="evidence" value="ECO:0007669"/>
    <property type="project" value="UniProtKB-UniRule"/>
</dbReference>
<dbReference type="GO" id="GO:0003676">
    <property type="term" value="F:nucleic acid binding"/>
    <property type="evidence" value="ECO:0007669"/>
    <property type="project" value="InterPro"/>
</dbReference>
<dbReference type="GO" id="GO:0004523">
    <property type="term" value="F:RNA-DNA hybrid ribonuclease activity"/>
    <property type="evidence" value="ECO:0007669"/>
    <property type="project" value="UniProtKB-UniRule"/>
</dbReference>
<dbReference type="GO" id="GO:0043137">
    <property type="term" value="P:DNA replication, removal of RNA primer"/>
    <property type="evidence" value="ECO:0007669"/>
    <property type="project" value="TreeGrafter"/>
</dbReference>
<dbReference type="CDD" id="cd09278">
    <property type="entry name" value="RNase_HI_prokaryote_like"/>
    <property type="match status" value="1"/>
</dbReference>
<dbReference type="FunFam" id="3.30.420.10:FF:000089">
    <property type="entry name" value="Ribonuclease H"/>
    <property type="match status" value="1"/>
</dbReference>
<dbReference type="Gene3D" id="3.30.420.10">
    <property type="entry name" value="Ribonuclease H-like superfamily/Ribonuclease H"/>
    <property type="match status" value="1"/>
</dbReference>
<dbReference type="HAMAP" id="MF_00042">
    <property type="entry name" value="RNase_H"/>
    <property type="match status" value="1"/>
</dbReference>
<dbReference type="InterPro" id="IPR050092">
    <property type="entry name" value="RNase_H"/>
</dbReference>
<dbReference type="InterPro" id="IPR012337">
    <property type="entry name" value="RNaseH-like_sf"/>
</dbReference>
<dbReference type="InterPro" id="IPR002156">
    <property type="entry name" value="RNaseH_domain"/>
</dbReference>
<dbReference type="InterPro" id="IPR036397">
    <property type="entry name" value="RNaseH_sf"/>
</dbReference>
<dbReference type="InterPro" id="IPR022892">
    <property type="entry name" value="RNaseHI"/>
</dbReference>
<dbReference type="NCBIfam" id="NF001236">
    <property type="entry name" value="PRK00203.1"/>
    <property type="match status" value="1"/>
</dbReference>
<dbReference type="PANTHER" id="PTHR10642">
    <property type="entry name" value="RIBONUCLEASE H1"/>
    <property type="match status" value="1"/>
</dbReference>
<dbReference type="PANTHER" id="PTHR10642:SF26">
    <property type="entry name" value="RIBONUCLEASE H1"/>
    <property type="match status" value="1"/>
</dbReference>
<dbReference type="Pfam" id="PF00075">
    <property type="entry name" value="RNase_H"/>
    <property type="match status" value="1"/>
</dbReference>
<dbReference type="SUPFAM" id="SSF53098">
    <property type="entry name" value="Ribonuclease H-like"/>
    <property type="match status" value="1"/>
</dbReference>
<dbReference type="PROSITE" id="PS50879">
    <property type="entry name" value="RNASE_H_1"/>
    <property type="match status" value="1"/>
</dbReference>
<keyword id="KW-0963">Cytoplasm</keyword>
<keyword id="KW-0255">Endonuclease</keyword>
<keyword id="KW-0378">Hydrolase</keyword>
<keyword id="KW-0460">Magnesium</keyword>
<keyword id="KW-0479">Metal-binding</keyword>
<keyword id="KW-0540">Nuclease</keyword>
<keyword id="KW-1185">Reference proteome</keyword>
<comment type="function">
    <text evidence="1">Endonuclease that specifically degrades the RNA of RNA-DNA hybrids.</text>
</comment>
<comment type="catalytic activity">
    <reaction evidence="1">
        <text>Endonucleolytic cleavage to 5'-phosphomonoester.</text>
        <dbReference type="EC" id="3.1.26.4"/>
    </reaction>
</comment>
<comment type="cofactor">
    <cofactor evidence="1">
        <name>Mg(2+)</name>
        <dbReference type="ChEBI" id="CHEBI:18420"/>
    </cofactor>
    <text evidence="1">Binds 1 Mg(2+) ion per subunit. May bind a second metal ion at a regulatory site, or after substrate binding.</text>
</comment>
<comment type="subunit">
    <text evidence="1">Monomer.</text>
</comment>
<comment type="subcellular location">
    <subcellularLocation>
        <location evidence="1">Cytoplasm</location>
    </subcellularLocation>
</comment>
<comment type="similarity">
    <text evidence="1">Belongs to the RNase H family.</text>
</comment>
<accession>Q3A827</accession>
<protein>
    <recommendedName>
        <fullName evidence="1">Ribonuclease H</fullName>
        <shortName evidence="1">RNase H</shortName>
        <ecNumber evidence="1">3.1.26.4</ecNumber>
    </recommendedName>
</protein>